<gene>
    <name type="ordered locus">KLLA0B09812g</name>
</gene>
<feature type="chain" id="PRO_0000357310" description="Very-long-chain 3-oxoacyl-CoA reductase">
    <location>
        <begin position="1"/>
        <end position="346"/>
    </location>
</feature>
<feature type="transmembrane region" description="Helical" evidence="4">
    <location>
        <begin position="23"/>
        <end position="43"/>
    </location>
</feature>
<feature type="active site" description="Proton donor" evidence="2">
    <location>
        <position position="222"/>
    </location>
</feature>
<feature type="active site" description="Lowers pKa of active site Tyr" evidence="2">
    <location>
        <position position="226"/>
    </location>
</feature>
<feature type="binding site" evidence="1">
    <location>
        <position position="69"/>
    </location>
    <ligand>
        <name>NADP(+)</name>
        <dbReference type="ChEBI" id="CHEBI:58349"/>
    </ligand>
</feature>
<feature type="binding site" evidence="1">
    <location>
        <position position="123"/>
    </location>
    <ligand>
        <name>NADP(+)</name>
        <dbReference type="ChEBI" id="CHEBI:58349"/>
    </ligand>
</feature>
<feature type="binding site" evidence="2">
    <location>
        <position position="150"/>
    </location>
    <ligand>
        <name>NADP(+)</name>
        <dbReference type="ChEBI" id="CHEBI:58349"/>
    </ligand>
</feature>
<feature type="binding site" evidence="2">
    <location>
        <position position="222"/>
    </location>
    <ligand>
        <name>NADP(+)</name>
        <dbReference type="ChEBI" id="CHEBI:58349"/>
    </ligand>
</feature>
<feature type="binding site" evidence="2">
    <location>
        <position position="226"/>
    </location>
    <ligand>
        <name>NADP(+)</name>
        <dbReference type="ChEBI" id="CHEBI:58349"/>
    </ligand>
</feature>
<feature type="binding site" evidence="2">
    <location>
        <position position="255"/>
    </location>
    <ligand>
        <name>NADP(+)</name>
        <dbReference type="ChEBI" id="CHEBI:58349"/>
    </ligand>
</feature>
<feature type="binding site" evidence="1">
    <location>
        <position position="257"/>
    </location>
    <ligand>
        <name>NADP(+)</name>
        <dbReference type="ChEBI" id="CHEBI:58349"/>
    </ligand>
</feature>
<name>MKAR_KLULA</name>
<sequence>MVALIDQLYNVTALRECSSLNVAAWIVFGLGISKMVFLTLNFSKMVLDLFVLPGPDFKKYGKGKGAYAVVTGASDGIGKEYAKQLAKRGFNLILISRTESKLVELKKEIETECKIDVKILAIDVSSDSKENYTLIREVASGLPVTVLINNVGKSHSIPVPFDQTEESELRDIITINNTATLMITQTLLPQLKASVKTLKCRGLILTMGSFGGLLPTPFLATYSGSKAFLQSWSNALAGELSSDSIDVELVLSYLVTSAMSKIRRSSALIPSPKAFVRSTLNSIGKRCGAQERFATSTPYWSHALYHFIIENTVGVYSKIANSINYSFHLSIRKRALKKAERQAKKQ</sequence>
<accession>Q6CVS4</accession>
<dbReference type="EC" id="1.1.1.330" evidence="4"/>
<dbReference type="EMBL" id="CR382122">
    <property type="protein sequence ID" value="CAH02358.1"/>
    <property type="molecule type" value="Genomic_DNA"/>
</dbReference>
<dbReference type="RefSeq" id="XP_451965.1">
    <property type="nucleotide sequence ID" value="XM_451965.1"/>
</dbReference>
<dbReference type="SMR" id="Q6CVS4"/>
<dbReference type="FunCoup" id="Q6CVS4">
    <property type="interactions" value="727"/>
</dbReference>
<dbReference type="STRING" id="284590.Q6CVS4"/>
<dbReference type="PaxDb" id="284590-Q6CVS4"/>
<dbReference type="KEGG" id="kla:KLLA0_B09812g"/>
<dbReference type="eggNOG" id="KOG1014">
    <property type="taxonomic scope" value="Eukaryota"/>
</dbReference>
<dbReference type="HOGENOM" id="CLU_010194_38_0_1"/>
<dbReference type="InParanoid" id="Q6CVS4"/>
<dbReference type="OMA" id="LVAPGMM"/>
<dbReference type="UniPathway" id="UPA00094"/>
<dbReference type="Proteomes" id="UP000000598">
    <property type="component" value="Chromosome B"/>
</dbReference>
<dbReference type="GO" id="GO:0005789">
    <property type="term" value="C:endoplasmic reticulum membrane"/>
    <property type="evidence" value="ECO:0007669"/>
    <property type="project" value="UniProtKB-SubCell"/>
</dbReference>
<dbReference type="GO" id="GO:0045703">
    <property type="term" value="F:ketoreductase activity"/>
    <property type="evidence" value="ECO:0007669"/>
    <property type="project" value="UniProtKB-UniRule"/>
</dbReference>
<dbReference type="GO" id="GO:0141040">
    <property type="term" value="F:very-long-chain 3-oxoacyl-CoA reductase activity"/>
    <property type="evidence" value="ECO:0007669"/>
    <property type="project" value="UniProtKB-EC"/>
</dbReference>
<dbReference type="GO" id="GO:0030497">
    <property type="term" value="P:fatty acid elongation"/>
    <property type="evidence" value="ECO:0007669"/>
    <property type="project" value="UniProtKB-UniRule"/>
</dbReference>
<dbReference type="CDD" id="cd05356">
    <property type="entry name" value="17beta-HSD1_like_SDR_c"/>
    <property type="match status" value="1"/>
</dbReference>
<dbReference type="FunFam" id="3.40.50.720:FF:000317">
    <property type="entry name" value="Very-long-chain 3-oxoacyl-CoA reductase"/>
    <property type="match status" value="1"/>
</dbReference>
<dbReference type="Gene3D" id="3.40.50.720">
    <property type="entry name" value="NAD(P)-binding Rossmann-like Domain"/>
    <property type="match status" value="1"/>
</dbReference>
<dbReference type="HAMAP" id="MF_03107">
    <property type="entry name" value="3_ketoreductase"/>
    <property type="match status" value="1"/>
</dbReference>
<dbReference type="InterPro" id="IPR027533">
    <property type="entry name" value="3_ketoreductase_fungal"/>
</dbReference>
<dbReference type="InterPro" id="IPR036291">
    <property type="entry name" value="NAD(P)-bd_dom_sf"/>
</dbReference>
<dbReference type="InterPro" id="IPR020904">
    <property type="entry name" value="Sc_DH/Rdtase_CS"/>
</dbReference>
<dbReference type="InterPro" id="IPR002347">
    <property type="entry name" value="SDR_fam"/>
</dbReference>
<dbReference type="PANTHER" id="PTHR43086:SF2">
    <property type="entry name" value="HYDROXYSTEROID DEHYDROGENASE-LIKE PROTEIN 1"/>
    <property type="match status" value="1"/>
</dbReference>
<dbReference type="PANTHER" id="PTHR43086">
    <property type="entry name" value="VERY-LONG-CHAIN 3-OXOOACYL-COA REDUCTASE"/>
    <property type="match status" value="1"/>
</dbReference>
<dbReference type="Pfam" id="PF00106">
    <property type="entry name" value="adh_short"/>
    <property type="match status" value="1"/>
</dbReference>
<dbReference type="PIRSF" id="PIRSF000126">
    <property type="entry name" value="11-beta-HSD1"/>
    <property type="match status" value="1"/>
</dbReference>
<dbReference type="PRINTS" id="PR00081">
    <property type="entry name" value="GDHRDH"/>
</dbReference>
<dbReference type="SUPFAM" id="SSF51735">
    <property type="entry name" value="NAD(P)-binding Rossmann-fold domains"/>
    <property type="match status" value="1"/>
</dbReference>
<dbReference type="PROSITE" id="PS00061">
    <property type="entry name" value="ADH_SHORT"/>
    <property type="match status" value="1"/>
</dbReference>
<reference key="1">
    <citation type="journal article" date="2004" name="Nature">
        <title>Genome evolution in yeasts.</title>
        <authorList>
            <person name="Dujon B."/>
            <person name="Sherman D."/>
            <person name="Fischer G."/>
            <person name="Durrens P."/>
            <person name="Casaregola S."/>
            <person name="Lafontaine I."/>
            <person name="de Montigny J."/>
            <person name="Marck C."/>
            <person name="Neuveglise C."/>
            <person name="Talla E."/>
            <person name="Goffard N."/>
            <person name="Frangeul L."/>
            <person name="Aigle M."/>
            <person name="Anthouard V."/>
            <person name="Babour A."/>
            <person name="Barbe V."/>
            <person name="Barnay S."/>
            <person name="Blanchin S."/>
            <person name="Beckerich J.-M."/>
            <person name="Beyne E."/>
            <person name="Bleykasten C."/>
            <person name="Boisrame A."/>
            <person name="Boyer J."/>
            <person name="Cattolico L."/>
            <person name="Confanioleri F."/>
            <person name="de Daruvar A."/>
            <person name="Despons L."/>
            <person name="Fabre E."/>
            <person name="Fairhead C."/>
            <person name="Ferry-Dumazet H."/>
            <person name="Groppi A."/>
            <person name="Hantraye F."/>
            <person name="Hennequin C."/>
            <person name="Jauniaux N."/>
            <person name="Joyet P."/>
            <person name="Kachouri R."/>
            <person name="Kerrest A."/>
            <person name="Koszul R."/>
            <person name="Lemaire M."/>
            <person name="Lesur I."/>
            <person name="Ma L."/>
            <person name="Muller H."/>
            <person name="Nicaud J.-M."/>
            <person name="Nikolski M."/>
            <person name="Oztas S."/>
            <person name="Ozier-Kalogeropoulos O."/>
            <person name="Pellenz S."/>
            <person name="Potier S."/>
            <person name="Richard G.-F."/>
            <person name="Straub M.-L."/>
            <person name="Suleau A."/>
            <person name="Swennen D."/>
            <person name="Tekaia F."/>
            <person name="Wesolowski-Louvel M."/>
            <person name="Westhof E."/>
            <person name="Wirth B."/>
            <person name="Zeniou-Meyer M."/>
            <person name="Zivanovic Y."/>
            <person name="Bolotin-Fukuhara M."/>
            <person name="Thierry A."/>
            <person name="Bouchier C."/>
            <person name="Caudron B."/>
            <person name="Scarpelli C."/>
            <person name="Gaillardin C."/>
            <person name="Weissenbach J."/>
            <person name="Wincker P."/>
            <person name="Souciet J.-L."/>
        </authorList>
    </citation>
    <scope>NUCLEOTIDE SEQUENCE [LARGE SCALE GENOMIC DNA]</scope>
    <source>
        <strain>ATCC 8585 / CBS 2359 / DSM 70799 / NBRC 1267 / NRRL Y-1140 / WM37</strain>
    </source>
</reference>
<evidence type="ECO:0000250" key="1">
    <source>
        <dbReference type="UniProtKB" id="L0E2Z4"/>
    </source>
</evidence>
<evidence type="ECO:0000250" key="2">
    <source>
        <dbReference type="UniProtKB" id="O93868"/>
    </source>
</evidence>
<evidence type="ECO:0000250" key="3">
    <source>
        <dbReference type="UniProtKB" id="P38286"/>
    </source>
</evidence>
<evidence type="ECO:0000255" key="4">
    <source>
        <dbReference type="HAMAP-Rule" id="MF_03107"/>
    </source>
</evidence>
<protein>
    <recommendedName>
        <fullName evidence="4">Very-long-chain 3-oxoacyl-CoA reductase</fullName>
        <ecNumber evidence="4">1.1.1.330</ecNumber>
    </recommendedName>
    <alternativeName>
        <fullName evidence="4">3-ketoacyl-CoA reductase</fullName>
        <shortName evidence="4">3-ketoreductase</shortName>
        <shortName evidence="4">KAR</shortName>
    </alternativeName>
    <alternativeName>
        <fullName evidence="4">Microsomal beta-keto-reductase</fullName>
    </alternativeName>
</protein>
<proteinExistence type="inferred from homology"/>
<organism>
    <name type="scientific">Kluyveromyces lactis (strain ATCC 8585 / CBS 2359 / DSM 70799 / NBRC 1267 / NRRL Y-1140 / WM37)</name>
    <name type="common">Yeast</name>
    <name type="synonym">Candida sphaerica</name>
    <dbReference type="NCBI Taxonomy" id="284590"/>
    <lineage>
        <taxon>Eukaryota</taxon>
        <taxon>Fungi</taxon>
        <taxon>Dikarya</taxon>
        <taxon>Ascomycota</taxon>
        <taxon>Saccharomycotina</taxon>
        <taxon>Saccharomycetes</taxon>
        <taxon>Saccharomycetales</taxon>
        <taxon>Saccharomycetaceae</taxon>
        <taxon>Kluyveromyces</taxon>
    </lineage>
</organism>
<comment type="function">
    <text evidence="4">Component of the microsomal membrane bound fatty acid elongation system, which produces the 26-carbon very long-chain fatty acids (VLCFA) from palmitate. Catalyzes the reduction of the 3-ketoacyl-CoA intermediate that is formed in each cycle of fatty acid elongation. VLCFAs serve as precursors for ceramide and sphingolipids.</text>
</comment>
<comment type="catalytic activity">
    <reaction evidence="4">
        <text>a very-long-chain (3R)-3-hydroxyacyl-CoA + NADP(+) = a very-long-chain 3-oxoacyl-CoA + NADPH + H(+)</text>
        <dbReference type="Rhea" id="RHEA:48680"/>
        <dbReference type="ChEBI" id="CHEBI:15378"/>
        <dbReference type="ChEBI" id="CHEBI:57783"/>
        <dbReference type="ChEBI" id="CHEBI:58349"/>
        <dbReference type="ChEBI" id="CHEBI:85440"/>
        <dbReference type="ChEBI" id="CHEBI:90725"/>
        <dbReference type="EC" id="1.1.1.330"/>
    </reaction>
</comment>
<comment type="pathway">
    <text evidence="3">Lipid metabolism; fatty acid biosynthesis.</text>
</comment>
<comment type="subcellular location">
    <subcellularLocation>
        <location evidence="4">Endoplasmic reticulum membrane</location>
        <topology evidence="4">Single-pass membrane protein</topology>
    </subcellularLocation>
</comment>
<comment type="similarity">
    <text evidence="4">Belongs to the short-chain dehydrogenases/reductases (SDR) family.</text>
</comment>
<keyword id="KW-0256">Endoplasmic reticulum</keyword>
<keyword id="KW-0275">Fatty acid biosynthesis</keyword>
<keyword id="KW-0276">Fatty acid metabolism</keyword>
<keyword id="KW-0444">Lipid biosynthesis</keyword>
<keyword id="KW-0443">Lipid metabolism</keyword>
<keyword id="KW-0472">Membrane</keyword>
<keyword id="KW-0521">NADP</keyword>
<keyword id="KW-0560">Oxidoreductase</keyword>
<keyword id="KW-1185">Reference proteome</keyword>
<keyword id="KW-0812">Transmembrane</keyword>
<keyword id="KW-1133">Transmembrane helix</keyword>